<protein>
    <recommendedName>
        <fullName evidence="1">Siroheme synthase</fullName>
    </recommendedName>
    <domain>
        <recommendedName>
            <fullName evidence="1">Uroporphyrinogen-III C-methyltransferase</fullName>
            <shortName evidence="1">Urogen III methylase</shortName>
            <ecNumber evidence="1">2.1.1.107</ecNumber>
        </recommendedName>
        <alternativeName>
            <fullName evidence="1">SUMT</fullName>
        </alternativeName>
        <alternativeName>
            <fullName evidence="1">Uroporphyrinogen III methylase</fullName>
            <shortName evidence="1">UROM</shortName>
        </alternativeName>
    </domain>
    <domain>
        <recommendedName>
            <fullName evidence="1">Precorrin-2 dehydrogenase</fullName>
            <ecNumber evidence="1">1.3.1.76</ecNumber>
        </recommendedName>
    </domain>
    <domain>
        <recommendedName>
            <fullName evidence="1">Sirohydrochlorin ferrochelatase</fullName>
            <ecNumber evidence="1">4.99.1.4</ecNumber>
        </recommendedName>
    </domain>
</protein>
<reference key="1">
    <citation type="journal article" date="2006" name="Proc. Natl. Acad. Sci. U.S.A.">
        <title>Identification of genes subject to positive selection in uropathogenic strains of Escherichia coli: a comparative genomics approach.</title>
        <authorList>
            <person name="Chen S.L."/>
            <person name="Hung C.-S."/>
            <person name="Xu J."/>
            <person name="Reigstad C.S."/>
            <person name="Magrini V."/>
            <person name="Sabo A."/>
            <person name="Blasiar D."/>
            <person name="Bieri T."/>
            <person name="Meyer R.R."/>
            <person name="Ozersky P."/>
            <person name="Armstrong J.R."/>
            <person name="Fulton R.S."/>
            <person name="Latreille J.P."/>
            <person name="Spieth J."/>
            <person name="Hooton T.M."/>
            <person name="Mardis E.R."/>
            <person name="Hultgren S.J."/>
            <person name="Gordon J.I."/>
        </authorList>
    </citation>
    <scope>NUCLEOTIDE SEQUENCE [LARGE SCALE GENOMIC DNA]</scope>
    <source>
        <strain>UTI89 / UPEC</strain>
    </source>
</reference>
<accession>Q1R5R3</accession>
<gene>
    <name evidence="1" type="primary">cysG</name>
    <name type="ordered locus">UTI89_C3872</name>
</gene>
<name>CYSG_ECOUT</name>
<organism>
    <name type="scientific">Escherichia coli (strain UTI89 / UPEC)</name>
    <dbReference type="NCBI Taxonomy" id="364106"/>
    <lineage>
        <taxon>Bacteria</taxon>
        <taxon>Pseudomonadati</taxon>
        <taxon>Pseudomonadota</taxon>
        <taxon>Gammaproteobacteria</taxon>
        <taxon>Enterobacterales</taxon>
        <taxon>Enterobacteriaceae</taxon>
        <taxon>Escherichia</taxon>
    </lineage>
</organism>
<dbReference type="EC" id="2.1.1.107" evidence="1"/>
<dbReference type="EC" id="1.3.1.76" evidence="1"/>
<dbReference type="EC" id="4.99.1.4" evidence="1"/>
<dbReference type="EMBL" id="CP000243">
    <property type="protein sequence ID" value="ABE09301.1"/>
    <property type="molecule type" value="Genomic_DNA"/>
</dbReference>
<dbReference type="RefSeq" id="WP_000349869.1">
    <property type="nucleotide sequence ID" value="NZ_CP064825.1"/>
</dbReference>
<dbReference type="SMR" id="Q1R5R3"/>
<dbReference type="KEGG" id="eci:UTI89_C3872"/>
<dbReference type="HOGENOM" id="CLU_011276_2_0_6"/>
<dbReference type="UniPathway" id="UPA00148">
    <property type="reaction ID" value="UER00211"/>
</dbReference>
<dbReference type="UniPathway" id="UPA00148">
    <property type="reaction ID" value="UER00222"/>
</dbReference>
<dbReference type="UniPathway" id="UPA00262">
    <property type="reaction ID" value="UER00211"/>
</dbReference>
<dbReference type="UniPathway" id="UPA00262">
    <property type="reaction ID" value="UER00222"/>
</dbReference>
<dbReference type="UniPathway" id="UPA00262">
    <property type="reaction ID" value="UER00376"/>
</dbReference>
<dbReference type="Proteomes" id="UP000001952">
    <property type="component" value="Chromosome"/>
</dbReference>
<dbReference type="GO" id="GO:0051287">
    <property type="term" value="F:NAD binding"/>
    <property type="evidence" value="ECO:0007669"/>
    <property type="project" value="InterPro"/>
</dbReference>
<dbReference type="GO" id="GO:0043115">
    <property type="term" value="F:precorrin-2 dehydrogenase activity"/>
    <property type="evidence" value="ECO:0007669"/>
    <property type="project" value="UniProtKB-UniRule"/>
</dbReference>
<dbReference type="GO" id="GO:0051266">
    <property type="term" value="F:sirohydrochlorin ferrochelatase activity"/>
    <property type="evidence" value="ECO:0007669"/>
    <property type="project" value="UniProtKB-EC"/>
</dbReference>
<dbReference type="GO" id="GO:0004851">
    <property type="term" value="F:uroporphyrin-III C-methyltransferase activity"/>
    <property type="evidence" value="ECO:0007669"/>
    <property type="project" value="UniProtKB-UniRule"/>
</dbReference>
<dbReference type="GO" id="GO:0009236">
    <property type="term" value="P:cobalamin biosynthetic process"/>
    <property type="evidence" value="ECO:0007669"/>
    <property type="project" value="UniProtKB-UniRule"/>
</dbReference>
<dbReference type="GO" id="GO:0032259">
    <property type="term" value="P:methylation"/>
    <property type="evidence" value="ECO:0007669"/>
    <property type="project" value="UniProtKB-KW"/>
</dbReference>
<dbReference type="GO" id="GO:0019354">
    <property type="term" value="P:siroheme biosynthetic process"/>
    <property type="evidence" value="ECO:0007669"/>
    <property type="project" value="UniProtKB-UniRule"/>
</dbReference>
<dbReference type="CDD" id="cd11642">
    <property type="entry name" value="SUMT"/>
    <property type="match status" value="1"/>
</dbReference>
<dbReference type="FunFam" id="1.10.8.210:FF:000001">
    <property type="entry name" value="Siroheme synthase"/>
    <property type="match status" value="1"/>
</dbReference>
<dbReference type="FunFam" id="3.30.160.110:FF:000001">
    <property type="entry name" value="Siroheme synthase"/>
    <property type="match status" value="1"/>
</dbReference>
<dbReference type="FunFam" id="3.30.950.10:FF:000001">
    <property type="entry name" value="Siroheme synthase"/>
    <property type="match status" value="1"/>
</dbReference>
<dbReference type="FunFam" id="3.40.1010.10:FF:000001">
    <property type="entry name" value="Siroheme synthase"/>
    <property type="match status" value="1"/>
</dbReference>
<dbReference type="FunFam" id="3.40.50.720:FF:000092">
    <property type="entry name" value="Siroheme synthase"/>
    <property type="match status" value="1"/>
</dbReference>
<dbReference type="Gene3D" id="3.40.1010.10">
    <property type="entry name" value="Cobalt-precorrin-4 Transmethylase, Domain 1"/>
    <property type="match status" value="1"/>
</dbReference>
<dbReference type="Gene3D" id="3.30.950.10">
    <property type="entry name" value="Methyltransferase, Cobalt-precorrin-4 Transmethylase, Domain 2"/>
    <property type="match status" value="1"/>
</dbReference>
<dbReference type="Gene3D" id="3.40.50.720">
    <property type="entry name" value="NAD(P)-binding Rossmann-like Domain"/>
    <property type="match status" value="1"/>
</dbReference>
<dbReference type="Gene3D" id="1.10.8.210">
    <property type="entry name" value="Sirohaem synthase, dimerisation domain"/>
    <property type="match status" value="1"/>
</dbReference>
<dbReference type="Gene3D" id="3.30.160.110">
    <property type="entry name" value="Siroheme synthase, domain 2"/>
    <property type="match status" value="1"/>
</dbReference>
<dbReference type="HAMAP" id="MF_01646">
    <property type="entry name" value="Siroheme_synth"/>
    <property type="match status" value="1"/>
</dbReference>
<dbReference type="InterPro" id="IPR000878">
    <property type="entry name" value="4pyrrol_Mease"/>
</dbReference>
<dbReference type="InterPro" id="IPR035996">
    <property type="entry name" value="4pyrrol_Methylase_sf"/>
</dbReference>
<dbReference type="InterPro" id="IPR014777">
    <property type="entry name" value="4pyrrole_Mease_sub1"/>
</dbReference>
<dbReference type="InterPro" id="IPR014776">
    <property type="entry name" value="4pyrrole_Mease_sub2"/>
</dbReference>
<dbReference type="InterPro" id="IPR006366">
    <property type="entry name" value="CobA/CysG_C"/>
</dbReference>
<dbReference type="InterPro" id="IPR036291">
    <property type="entry name" value="NAD(P)-bd_dom_sf"/>
</dbReference>
<dbReference type="InterPro" id="IPR050161">
    <property type="entry name" value="Siro_Cobalamin_biosynth"/>
</dbReference>
<dbReference type="InterPro" id="IPR037115">
    <property type="entry name" value="Sirohaem_synt_dimer_dom_sf"/>
</dbReference>
<dbReference type="InterPro" id="IPR012409">
    <property type="entry name" value="Sirohaem_synth"/>
</dbReference>
<dbReference type="InterPro" id="IPR028281">
    <property type="entry name" value="Sirohaem_synthase_central"/>
</dbReference>
<dbReference type="InterPro" id="IPR019478">
    <property type="entry name" value="Sirohaem_synthase_dimer_dom"/>
</dbReference>
<dbReference type="InterPro" id="IPR006367">
    <property type="entry name" value="Sirohaem_synthase_N"/>
</dbReference>
<dbReference type="InterPro" id="IPR003043">
    <property type="entry name" value="Uropor_MeTrfase_CS"/>
</dbReference>
<dbReference type="NCBIfam" id="TIGR01469">
    <property type="entry name" value="cobA_cysG_Cterm"/>
    <property type="match status" value="1"/>
</dbReference>
<dbReference type="NCBIfam" id="TIGR01470">
    <property type="entry name" value="cysG_Nterm"/>
    <property type="match status" value="1"/>
</dbReference>
<dbReference type="NCBIfam" id="NF004790">
    <property type="entry name" value="PRK06136.1"/>
    <property type="match status" value="1"/>
</dbReference>
<dbReference type="NCBIfam" id="NF007922">
    <property type="entry name" value="PRK10637.1"/>
    <property type="match status" value="1"/>
</dbReference>
<dbReference type="PANTHER" id="PTHR45790:SF1">
    <property type="entry name" value="SIROHEME SYNTHASE"/>
    <property type="match status" value="1"/>
</dbReference>
<dbReference type="PANTHER" id="PTHR45790">
    <property type="entry name" value="SIROHEME SYNTHASE-RELATED"/>
    <property type="match status" value="1"/>
</dbReference>
<dbReference type="Pfam" id="PF10414">
    <property type="entry name" value="CysG_dimeriser"/>
    <property type="match status" value="1"/>
</dbReference>
<dbReference type="Pfam" id="PF13241">
    <property type="entry name" value="NAD_binding_7"/>
    <property type="match status" value="1"/>
</dbReference>
<dbReference type="Pfam" id="PF14824">
    <property type="entry name" value="Sirohm_synth_M"/>
    <property type="match status" value="1"/>
</dbReference>
<dbReference type="Pfam" id="PF00590">
    <property type="entry name" value="TP_methylase"/>
    <property type="match status" value="1"/>
</dbReference>
<dbReference type="PIRSF" id="PIRSF036426">
    <property type="entry name" value="Sirohaem_synth"/>
    <property type="match status" value="1"/>
</dbReference>
<dbReference type="SUPFAM" id="SSF51735">
    <property type="entry name" value="NAD(P)-binding Rossmann-fold domains"/>
    <property type="match status" value="1"/>
</dbReference>
<dbReference type="SUPFAM" id="SSF75615">
    <property type="entry name" value="Siroheme synthase middle domains-like"/>
    <property type="match status" value="1"/>
</dbReference>
<dbReference type="SUPFAM" id="SSF53790">
    <property type="entry name" value="Tetrapyrrole methylase"/>
    <property type="match status" value="1"/>
</dbReference>
<dbReference type="PROSITE" id="PS00839">
    <property type="entry name" value="SUMT_1"/>
    <property type="match status" value="1"/>
</dbReference>
<dbReference type="PROSITE" id="PS00840">
    <property type="entry name" value="SUMT_2"/>
    <property type="match status" value="1"/>
</dbReference>
<sequence length="457" mass="50007">MDHLPIFCQLRDRDCLIVGGGDVAERKARLLLDAGARLTVNALAFIPQFTAWADAGMLTLVEGPFDESLLDTCWLAIAATDDDALNQRVSEAAESRRIFCNVVDAPKAASFIMPSIIDRSPLMVAVSSGGTSPVLARLLREKLESLLPLHLGQVAKYAGQLRGRVKQQFATMGERRRFWEKLFVNDRLAQSLANNDQKAITETTEQLINEPLDHRGEVVLVGAGPGDAGLLTLKGLQQIQQADVVVYDRLVSDDIMNLIRRDADRVFVGKRAGYHCVPQEEINQILLREAQKGKRVVRLKGGDPFIFGRGGEELETLCNAGIPFSVVPGITAASGCSAYSGIPLTHRDYAQSVRLITGHLKTGGELDWENLAAEKQTLVFYMGLNQAATIQQKLIEYGMPGEMPVAIVENGTAVTQRVIDGTLTQLGELAQQMNSPSLIIIGRVVGLRDKLNWFSNH</sequence>
<comment type="function">
    <text evidence="1">Multifunctional enzyme that catalyzes the SAM-dependent methylations of uroporphyrinogen III at position C-2 and C-7 to form precorrin-2 via precorrin-1. Then it catalyzes the NAD-dependent ring dehydrogenation of precorrin-2 to yield sirohydrochlorin. Finally, it catalyzes the ferrochelation of sirohydrochlorin to yield siroheme.</text>
</comment>
<comment type="catalytic activity">
    <reaction evidence="1">
        <text>uroporphyrinogen III + 2 S-adenosyl-L-methionine = precorrin-2 + 2 S-adenosyl-L-homocysteine + H(+)</text>
        <dbReference type="Rhea" id="RHEA:32459"/>
        <dbReference type="ChEBI" id="CHEBI:15378"/>
        <dbReference type="ChEBI" id="CHEBI:57308"/>
        <dbReference type="ChEBI" id="CHEBI:57856"/>
        <dbReference type="ChEBI" id="CHEBI:58827"/>
        <dbReference type="ChEBI" id="CHEBI:59789"/>
        <dbReference type="EC" id="2.1.1.107"/>
    </reaction>
</comment>
<comment type="catalytic activity">
    <reaction evidence="1">
        <text>precorrin-2 + NAD(+) = sirohydrochlorin + NADH + 2 H(+)</text>
        <dbReference type="Rhea" id="RHEA:15613"/>
        <dbReference type="ChEBI" id="CHEBI:15378"/>
        <dbReference type="ChEBI" id="CHEBI:57540"/>
        <dbReference type="ChEBI" id="CHEBI:57945"/>
        <dbReference type="ChEBI" id="CHEBI:58351"/>
        <dbReference type="ChEBI" id="CHEBI:58827"/>
        <dbReference type="EC" id="1.3.1.76"/>
    </reaction>
</comment>
<comment type="catalytic activity">
    <reaction evidence="1">
        <text>siroheme + 2 H(+) = sirohydrochlorin + Fe(2+)</text>
        <dbReference type="Rhea" id="RHEA:24360"/>
        <dbReference type="ChEBI" id="CHEBI:15378"/>
        <dbReference type="ChEBI" id="CHEBI:29033"/>
        <dbReference type="ChEBI" id="CHEBI:58351"/>
        <dbReference type="ChEBI" id="CHEBI:60052"/>
        <dbReference type="EC" id="4.99.1.4"/>
    </reaction>
</comment>
<comment type="pathway">
    <text evidence="1">Cofactor biosynthesis; adenosylcobalamin biosynthesis; precorrin-2 from uroporphyrinogen III: step 1/1.</text>
</comment>
<comment type="pathway">
    <text evidence="1">Cofactor biosynthesis; adenosylcobalamin biosynthesis; sirohydrochlorin from precorrin-2: step 1/1.</text>
</comment>
<comment type="pathway">
    <text evidence="1">Porphyrin-containing compound metabolism; siroheme biosynthesis; precorrin-2 from uroporphyrinogen III: step 1/1.</text>
</comment>
<comment type="pathway">
    <text evidence="1">Porphyrin-containing compound metabolism; siroheme biosynthesis; siroheme from sirohydrochlorin: step 1/1.</text>
</comment>
<comment type="pathway">
    <text evidence="1">Porphyrin-containing compound metabolism; siroheme biosynthesis; sirohydrochlorin from precorrin-2: step 1/1.</text>
</comment>
<comment type="similarity">
    <text evidence="1">In the N-terminal section; belongs to the precorrin-2 dehydrogenase / sirohydrochlorin ferrochelatase family.</text>
</comment>
<comment type="similarity">
    <text evidence="1">In the C-terminal section; belongs to the precorrin methyltransferase family.</text>
</comment>
<feature type="chain" id="PRO_0000330507" description="Siroheme synthase">
    <location>
        <begin position="1"/>
        <end position="457"/>
    </location>
</feature>
<feature type="region of interest" description="Precorrin-2 dehydrogenase /sirohydrochlorin ferrochelatase" evidence="1">
    <location>
        <begin position="1"/>
        <end position="204"/>
    </location>
</feature>
<feature type="region of interest" description="Uroporphyrinogen-III C-methyltransferase" evidence="1">
    <location>
        <begin position="216"/>
        <end position="457"/>
    </location>
</feature>
<feature type="active site" description="Proton acceptor" evidence="1">
    <location>
        <position position="248"/>
    </location>
</feature>
<feature type="active site" description="Proton donor" evidence="1">
    <location>
        <position position="270"/>
    </location>
</feature>
<feature type="binding site" evidence="1">
    <location>
        <begin position="22"/>
        <end position="23"/>
    </location>
    <ligand>
        <name>NAD(+)</name>
        <dbReference type="ChEBI" id="CHEBI:57540"/>
    </ligand>
</feature>
<feature type="binding site" evidence="1">
    <location>
        <begin position="43"/>
        <end position="44"/>
    </location>
    <ligand>
        <name>NAD(+)</name>
        <dbReference type="ChEBI" id="CHEBI:57540"/>
    </ligand>
</feature>
<feature type="binding site" evidence="1">
    <location>
        <position position="225"/>
    </location>
    <ligand>
        <name>S-adenosyl-L-methionine</name>
        <dbReference type="ChEBI" id="CHEBI:59789"/>
    </ligand>
</feature>
<feature type="binding site" evidence="1">
    <location>
        <begin position="301"/>
        <end position="303"/>
    </location>
    <ligand>
        <name>S-adenosyl-L-methionine</name>
        <dbReference type="ChEBI" id="CHEBI:59789"/>
    </ligand>
</feature>
<feature type="binding site" evidence="1">
    <location>
        <position position="306"/>
    </location>
    <ligand>
        <name>S-adenosyl-L-methionine</name>
        <dbReference type="ChEBI" id="CHEBI:59789"/>
    </ligand>
</feature>
<feature type="binding site" evidence="1">
    <location>
        <begin position="331"/>
        <end position="332"/>
    </location>
    <ligand>
        <name>S-adenosyl-L-methionine</name>
        <dbReference type="ChEBI" id="CHEBI:59789"/>
    </ligand>
</feature>
<feature type="binding site" evidence="1">
    <location>
        <position position="382"/>
    </location>
    <ligand>
        <name>S-adenosyl-L-methionine</name>
        <dbReference type="ChEBI" id="CHEBI:59789"/>
    </ligand>
</feature>
<feature type="binding site" evidence="1">
    <location>
        <position position="411"/>
    </location>
    <ligand>
        <name>S-adenosyl-L-methionine</name>
        <dbReference type="ChEBI" id="CHEBI:59789"/>
    </ligand>
</feature>
<feature type="modified residue" description="Phosphoserine" evidence="1">
    <location>
        <position position="128"/>
    </location>
</feature>
<proteinExistence type="inferred from homology"/>
<evidence type="ECO:0000255" key="1">
    <source>
        <dbReference type="HAMAP-Rule" id="MF_01646"/>
    </source>
</evidence>
<keyword id="KW-0169">Cobalamin biosynthesis</keyword>
<keyword id="KW-0456">Lyase</keyword>
<keyword id="KW-0489">Methyltransferase</keyword>
<keyword id="KW-0511">Multifunctional enzyme</keyword>
<keyword id="KW-0520">NAD</keyword>
<keyword id="KW-0560">Oxidoreductase</keyword>
<keyword id="KW-0597">Phosphoprotein</keyword>
<keyword id="KW-0627">Porphyrin biosynthesis</keyword>
<keyword id="KW-0949">S-adenosyl-L-methionine</keyword>
<keyword id="KW-0808">Transferase</keyword>